<comment type="function">
    <text evidence="1">Catalyzes the phosphorolysis of diverse nucleosides, yielding D-ribose 1-phosphate and the respective free bases. Can use uridine, adenosine, guanosine, cytidine, thymidine, inosine and xanthosine as substrates. Also catalyzes the reverse reactions.</text>
</comment>
<comment type="catalytic activity">
    <reaction evidence="1">
        <text>a purine D-ribonucleoside + phosphate = a purine nucleobase + alpha-D-ribose 1-phosphate</text>
        <dbReference type="Rhea" id="RHEA:19805"/>
        <dbReference type="ChEBI" id="CHEBI:26386"/>
        <dbReference type="ChEBI" id="CHEBI:43474"/>
        <dbReference type="ChEBI" id="CHEBI:57720"/>
        <dbReference type="ChEBI" id="CHEBI:142355"/>
        <dbReference type="EC" id="2.4.2.1"/>
    </reaction>
</comment>
<comment type="catalytic activity">
    <reaction evidence="1">
        <text>adenosine + phosphate = alpha-D-ribose 1-phosphate + adenine</text>
        <dbReference type="Rhea" id="RHEA:27642"/>
        <dbReference type="ChEBI" id="CHEBI:16335"/>
        <dbReference type="ChEBI" id="CHEBI:16708"/>
        <dbReference type="ChEBI" id="CHEBI:43474"/>
        <dbReference type="ChEBI" id="CHEBI:57720"/>
        <dbReference type="EC" id="2.4.2.1"/>
    </reaction>
</comment>
<comment type="catalytic activity">
    <reaction evidence="1">
        <text>cytidine + phosphate = cytosine + alpha-D-ribose 1-phosphate</text>
        <dbReference type="Rhea" id="RHEA:52540"/>
        <dbReference type="ChEBI" id="CHEBI:16040"/>
        <dbReference type="ChEBI" id="CHEBI:17562"/>
        <dbReference type="ChEBI" id="CHEBI:43474"/>
        <dbReference type="ChEBI" id="CHEBI:57720"/>
        <dbReference type="EC" id="2.4.2.2"/>
    </reaction>
</comment>
<comment type="catalytic activity">
    <reaction evidence="1">
        <text>guanosine + phosphate = alpha-D-ribose 1-phosphate + guanine</text>
        <dbReference type="Rhea" id="RHEA:13233"/>
        <dbReference type="ChEBI" id="CHEBI:16235"/>
        <dbReference type="ChEBI" id="CHEBI:16750"/>
        <dbReference type="ChEBI" id="CHEBI:43474"/>
        <dbReference type="ChEBI" id="CHEBI:57720"/>
        <dbReference type="EC" id="2.4.2.1"/>
    </reaction>
</comment>
<comment type="catalytic activity">
    <reaction evidence="1">
        <text>inosine + phosphate = alpha-D-ribose 1-phosphate + hypoxanthine</text>
        <dbReference type="Rhea" id="RHEA:27646"/>
        <dbReference type="ChEBI" id="CHEBI:17368"/>
        <dbReference type="ChEBI" id="CHEBI:17596"/>
        <dbReference type="ChEBI" id="CHEBI:43474"/>
        <dbReference type="ChEBI" id="CHEBI:57720"/>
        <dbReference type="EC" id="2.4.2.1"/>
    </reaction>
</comment>
<comment type="catalytic activity">
    <reaction evidence="1">
        <text>thymidine + phosphate = 2-deoxy-alpha-D-ribose 1-phosphate + thymine</text>
        <dbReference type="Rhea" id="RHEA:16037"/>
        <dbReference type="ChEBI" id="CHEBI:17748"/>
        <dbReference type="ChEBI" id="CHEBI:17821"/>
        <dbReference type="ChEBI" id="CHEBI:43474"/>
        <dbReference type="ChEBI" id="CHEBI:57259"/>
        <dbReference type="EC" id="2.4.2.2"/>
    </reaction>
</comment>
<comment type="catalytic activity">
    <reaction evidence="1">
        <text>uridine + phosphate = alpha-D-ribose 1-phosphate + uracil</text>
        <dbReference type="Rhea" id="RHEA:24388"/>
        <dbReference type="ChEBI" id="CHEBI:16704"/>
        <dbReference type="ChEBI" id="CHEBI:17568"/>
        <dbReference type="ChEBI" id="CHEBI:43474"/>
        <dbReference type="ChEBI" id="CHEBI:57720"/>
        <dbReference type="EC" id="2.4.2.2"/>
    </reaction>
</comment>
<comment type="catalytic activity">
    <reaction evidence="1">
        <text>xanthosine + phosphate = alpha-D-ribose 1-phosphate + xanthine</text>
        <dbReference type="Rhea" id="RHEA:27638"/>
        <dbReference type="ChEBI" id="CHEBI:17712"/>
        <dbReference type="ChEBI" id="CHEBI:18107"/>
        <dbReference type="ChEBI" id="CHEBI:43474"/>
        <dbReference type="ChEBI" id="CHEBI:57720"/>
        <dbReference type="EC" id="2.4.2.1"/>
    </reaction>
</comment>
<comment type="similarity">
    <text evidence="1">Belongs to the nucleoside phosphorylase PpnP family.</text>
</comment>
<accession>A4SMV5</accession>
<sequence>MLKVNEYFDGNVKSIGFEQKGDKATVGVMEAGDYQFNTAAPERMTVVKGALTIQLADEDEWHTYSQGQSFEVAGHSSFKLEVKTPTAYLCEFLD</sequence>
<gene>
    <name evidence="1" type="primary">ppnP</name>
    <name type="ordered locus">ASA_2162</name>
</gene>
<dbReference type="EC" id="2.4.2.1" evidence="1"/>
<dbReference type="EC" id="2.4.2.2" evidence="1"/>
<dbReference type="EMBL" id="CP000644">
    <property type="protein sequence ID" value="ABO90227.1"/>
    <property type="molecule type" value="Genomic_DNA"/>
</dbReference>
<dbReference type="RefSeq" id="WP_005311279.1">
    <property type="nucleotide sequence ID" value="NC_009348.1"/>
</dbReference>
<dbReference type="SMR" id="A4SMV5"/>
<dbReference type="STRING" id="29491.GCA_000820065_00431"/>
<dbReference type="KEGG" id="asa:ASA_2162"/>
<dbReference type="eggNOG" id="COG3123">
    <property type="taxonomic scope" value="Bacteria"/>
</dbReference>
<dbReference type="HOGENOM" id="CLU_157874_0_0_6"/>
<dbReference type="Proteomes" id="UP000000225">
    <property type="component" value="Chromosome"/>
</dbReference>
<dbReference type="GO" id="GO:0005829">
    <property type="term" value="C:cytosol"/>
    <property type="evidence" value="ECO:0007669"/>
    <property type="project" value="TreeGrafter"/>
</dbReference>
<dbReference type="GO" id="GO:0047975">
    <property type="term" value="F:guanosine phosphorylase activity"/>
    <property type="evidence" value="ECO:0007669"/>
    <property type="project" value="UniProtKB-EC"/>
</dbReference>
<dbReference type="GO" id="GO:0004731">
    <property type="term" value="F:purine-nucleoside phosphorylase activity"/>
    <property type="evidence" value="ECO:0007669"/>
    <property type="project" value="UniProtKB-UniRule"/>
</dbReference>
<dbReference type="GO" id="GO:0009032">
    <property type="term" value="F:thymidine phosphorylase activity"/>
    <property type="evidence" value="ECO:0007669"/>
    <property type="project" value="UniProtKB-EC"/>
</dbReference>
<dbReference type="GO" id="GO:0004850">
    <property type="term" value="F:uridine phosphorylase activity"/>
    <property type="evidence" value="ECO:0007669"/>
    <property type="project" value="UniProtKB-EC"/>
</dbReference>
<dbReference type="CDD" id="cd20296">
    <property type="entry name" value="cupin_PpnP-like"/>
    <property type="match status" value="1"/>
</dbReference>
<dbReference type="FunFam" id="2.60.120.10:FF:000016">
    <property type="entry name" value="Pyrimidine/purine nucleoside phosphorylase"/>
    <property type="match status" value="1"/>
</dbReference>
<dbReference type="Gene3D" id="2.60.120.10">
    <property type="entry name" value="Jelly Rolls"/>
    <property type="match status" value="1"/>
</dbReference>
<dbReference type="HAMAP" id="MF_01537">
    <property type="entry name" value="Nucleos_phosphorylase_PpnP"/>
    <property type="match status" value="1"/>
</dbReference>
<dbReference type="InterPro" id="IPR009664">
    <property type="entry name" value="Ppnp"/>
</dbReference>
<dbReference type="InterPro" id="IPR014710">
    <property type="entry name" value="RmlC-like_jellyroll"/>
</dbReference>
<dbReference type="InterPro" id="IPR011051">
    <property type="entry name" value="RmlC_Cupin_sf"/>
</dbReference>
<dbReference type="PANTHER" id="PTHR36540">
    <property type="entry name" value="PYRIMIDINE/PURINE NUCLEOSIDE PHOSPHORYLASE"/>
    <property type="match status" value="1"/>
</dbReference>
<dbReference type="PANTHER" id="PTHR36540:SF1">
    <property type="entry name" value="PYRIMIDINE_PURINE NUCLEOSIDE PHOSPHORYLASE"/>
    <property type="match status" value="1"/>
</dbReference>
<dbReference type="Pfam" id="PF06865">
    <property type="entry name" value="Ppnp"/>
    <property type="match status" value="1"/>
</dbReference>
<dbReference type="SUPFAM" id="SSF51182">
    <property type="entry name" value="RmlC-like cupins"/>
    <property type="match status" value="1"/>
</dbReference>
<feature type="chain" id="PRO_0000298687" description="Pyrimidine/purine nucleoside phosphorylase">
    <location>
        <begin position="1"/>
        <end position="94"/>
    </location>
</feature>
<keyword id="KW-0328">Glycosyltransferase</keyword>
<keyword id="KW-0808">Transferase</keyword>
<protein>
    <recommendedName>
        <fullName evidence="1">Pyrimidine/purine nucleoside phosphorylase</fullName>
        <ecNumber evidence="1">2.4.2.1</ecNumber>
        <ecNumber evidence="1">2.4.2.2</ecNumber>
    </recommendedName>
    <alternativeName>
        <fullName evidence="1">Adenosine phosphorylase</fullName>
    </alternativeName>
    <alternativeName>
        <fullName evidence="1">Cytidine phosphorylase</fullName>
    </alternativeName>
    <alternativeName>
        <fullName evidence="1">Guanosine phosphorylase</fullName>
    </alternativeName>
    <alternativeName>
        <fullName evidence="1">Inosine phosphorylase</fullName>
    </alternativeName>
    <alternativeName>
        <fullName evidence="1">Thymidine phosphorylase</fullName>
    </alternativeName>
    <alternativeName>
        <fullName evidence="1">Uridine phosphorylase</fullName>
    </alternativeName>
    <alternativeName>
        <fullName evidence="1">Xanthosine phosphorylase</fullName>
    </alternativeName>
</protein>
<reference key="1">
    <citation type="journal article" date="2008" name="BMC Genomics">
        <title>The genome of Aeromonas salmonicida subsp. salmonicida A449: insights into the evolution of a fish pathogen.</title>
        <authorList>
            <person name="Reith M.E."/>
            <person name="Singh R.K."/>
            <person name="Curtis B."/>
            <person name="Boyd J.M."/>
            <person name="Bouevitch A."/>
            <person name="Kimball J."/>
            <person name="Munholland J."/>
            <person name="Murphy C."/>
            <person name="Sarty D."/>
            <person name="Williams J."/>
            <person name="Nash J.H."/>
            <person name="Johnson S.C."/>
            <person name="Brown L.L."/>
        </authorList>
    </citation>
    <scope>NUCLEOTIDE SEQUENCE [LARGE SCALE GENOMIC DNA]</scope>
    <source>
        <strain>A449</strain>
    </source>
</reference>
<organism>
    <name type="scientific">Aeromonas salmonicida (strain A449)</name>
    <dbReference type="NCBI Taxonomy" id="382245"/>
    <lineage>
        <taxon>Bacteria</taxon>
        <taxon>Pseudomonadati</taxon>
        <taxon>Pseudomonadota</taxon>
        <taxon>Gammaproteobacteria</taxon>
        <taxon>Aeromonadales</taxon>
        <taxon>Aeromonadaceae</taxon>
        <taxon>Aeromonas</taxon>
    </lineage>
</organism>
<name>PPNP_AERS4</name>
<proteinExistence type="inferred from homology"/>
<evidence type="ECO:0000255" key="1">
    <source>
        <dbReference type="HAMAP-Rule" id="MF_01537"/>
    </source>
</evidence>